<reference key="1">
    <citation type="journal article" date="1998" name="DNA Res.">
        <title>Complete sequence and gene organization of the genome of a hyper-thermophilic archaebacterium, Pyrococcus horikoshii OT3.</title>
        <authorList>
            <person name="Kawarabayasi Y."/>
            <person name="Sawada M."/>
            <person name="Horikawa H."/>
            <person name="Haikawa Y."/>
            <person name="Hino Y."/>
            <person name="Yamamoto S."/>
            <person name="Sekine M."/>
            <person name="Baba S."/>
            <person name="Kosugi H."/>
            <person name="Hosoyama A."/>
            <person name="Nagai Y."/>
            <person name="Sakai M."/>
            <person name="Ogura K."/>
            <person name="Otsuka R."/>
            <person name="Nakazawa H."/>
            <person name="Takamiya M."/>
            <person name="Ohfuku Y."/>
            <person name="Funahashi T."/>
            <person name="Tanaka T."/>
            <person name="Kudoh Y."/>
            <person name="Yamazaki J."/>
            <person name="Kushida N."/>
            <person name="Oguchi A."/>
            <person name="Aoki K."/>
            <person name="Yoshizawa T."/>
            <person name="Nakamura Y."/>
            <person name="Robb F.T."/>
            <person name="Horikoshi K."/>
            <person name="Masuchi Y."/>
            <person name="Shizuya H."/>
            <person name="Kikuchi H."/>
        </authorList>
    </citation>
    <scope>NUCLEOTIDE SEQUENCE [LARGE SCALE GENOMIC DNA]</scope>
    <source>
        <strain>ATCC 700860 / DSM 12428 / JCM 9974 / NBRC 100139 / OT-3</strain>
    </source>
</reference>
<organism>
    <name type="scientific">Pyrococcus horikoshii (strain ATCC 700860 / DSM 12428 / JCM 9974 / NBRC 100139 / OT-3)</name>
    <dbReference type="NCBI Taxonomy" id="70601"/>
    <lineage>
        <taxon>Archaea</taxon>
        <taxon>Methanobacteriati</taxon>
        <taxon>Methanobacteriota</taxon>
        <taxon>Thermococci</taxon>
        <taxon>Thermococcales</taxon>
        <taxon>Thermococcaceae</taxon>
        <taxon>Pyrococcus</taxon>
    </lineage>
</organism>
<gene>
    <name evidence="1" type="primary">gcvT</name>
    <name type="ordered locus">PH1146</name>
</gene>
<protein>
    <recommendedName>
        <fullName evidence="1">Probable aminomethyltransferase</fullName>
        <ecNumber evidence="1">2.1.2.10</ecNumber>
    </recommendedName>
    <alternativeName>
        <fullName evidence="1">Glycine cleavage system T protein</fullName>
    </alternativeName>
</protein>
<dbReference type="EC" id="2.1.2.10" evidence="1"/>
<dbReference type="EMBL" id="BA000001">
    <property type="protein sequence ID" value="BAA30246.1"/>
    <property type="status" value="ALT_INIT"/>
    <property type="molecule type" value="Genomic_DNA"/>
</dbReference>
<dbReference type="PIR" id="D71056">
    <property type="entry name" value="D71056"/>
</dbReference>
<dbReference type="RefSeq" id="WP_048053320.1">
    <property type="nucleotide sequence ID" value="NC_000961.1"/>
</dbReference>
<dbReference type="PDB" id="1V5V">
    <property type="method" value="X-ray"/>
    <property type="resolution" value="1.50 A"/>
    <property type="chains" value="A/B=1-398"/>
</dbReference>
<dbReference type="PDBsum" id="1V5V"/>
<dbReference type="SMR" id="O58888"/>
<dbReference type="STRING" id="70601.gene:9378107"/>
<dbReference type="EnsemblBacteria" id="BAA30246">
    <property type="protein sequence ID" value="BAA30246"/>
    <property type="gene ID" value="BAA30246"/>
</dbReference>
<dbReference type="GeneID" id="1443465"/>
<dbReference type="KEGG" id="pho:PH1146"/>
<dbReference type="eggNOG" id="arCOG00756">
    <property type="taxonomic scope" value="Archaea"/>
</dbReference>
<dbReference type="OrthoDB" id="2001at2157"/>
<dbReference type="BRENDA" id="1.4.1.27">
    <property type="organism ID" value="5244"/>
</dbReference>
<dbReference type="EvolutionaryTrace" id="O58888"/>
<dbReference type="Proteomes" id="UP000000752">
    <property type="component" value="Chromosome"/>
</dbReference>
<dbReference type="GO" id="GO:0005960">
    <property type="term" value="C:glycine cleavage complex"/>
    <property type="evidence" value="ECO:0007669"/>
    <property type="project" value="InterPro"/>
</dbReference>
<dbReference type="GO" id="GO:0004047">
    <property type="term" value="F:aminomethyltransferase activity"/>
    <property type="evidence" value="ECO:0007669"/>
    <property type="project" value="UniProtKB-UniRule"/>
</dbReference>
<dbReference type="GO" id="GO:0008483">
    <property type="term" value="F:transaminase activity"/>
    <property type="evidence" value="ECO:0007669"/>
    <property type="project" value="UniProtKB-KW"/>
</dbReference>
<dbReference type="GO" id="GO:0019464">
    <property type="term" value="P:glycine decarboxylation via glycine cleavage system"/>
    <property type="evidence" value="ECO:0007669"/>
    <property type="project" value="UniProtKB-UniRule"/>
</dbReference>
<dbReference type="FunFam" id="2.40.30.110:FF:000003">
    <property type="entry name" value="Aminomethyltransferase"/>
    <property type="match status" value="1"/>
</dbReference>
<dbReference type="Gene3D" id="2.40.30.110">
    <property type="entry name" value="Aminomethyltransferase beta-barrel domains"/>
    <property type="match status" value="1"/>
</dbReference>
<dbReference type="Gene3D" id="3.30.70.1400">
    <property type="entry name" value="Aminomethyltransferase beta-barrel domains"/>
    <property type="match status" value="1"/>
</dbReference>
<dbReference type="Gene3D" id="4.10.1250.10">
    <property type="entry name" value="Aminomethyltransferase fragment"/>
    <property type="match status" value="1"/>
</dbReference>
<dbReference type="Gene3D" id="3.30.1360.120">
    <property type="entry name" value="Probable tRNA modification gtpase trme, domain 1"/>
    <property type="match status" value="1"/>
</dbReference>
<dbReference type="HAMAP" id="MF_00259">
    <property type="entry name" value="GcvT"/>
    <property type="match status" value="1"/>
</dbReference>
<dbReference type="InterPro" id="IPR006223">
    <property type="entry name" value="GCS_T"/>
</dbReference>
<dbReference type="InterPro" id="IPR022903">
    <property type="entry name" value="GCS_T_bac"/>
</dbReference>
<dbReference type="InterPro" id="IPR013977">
    <property type="entry name" value="GCST_C"/>
</dbReference>
<dbReference type="InterPro" id="IPR006222">
    <property type="entry name" value="GCV_T_N"/>
</dbReference>
<dbReference type="InterPro" id="IPR028896">
    <property type="entry name" value="GcvT/YgfZ/DmdA"/>
</dbReference>
<dbReference type="InterPro" id="IPR029043">
    <property type="entry name" value="GcvT/YgfZ_C"/>
</dbReference>
<dbReference type="InterPro" id="IPR027266">
    <property type="entry name" value="TrmE/GcvT_dom1"/>
</dbReference>
<dbReference type="NCBIfam" id="TIGR00528">
    <property type="entry name" value="gcvT"/>
    <property type="match status" value="1"/>
</dbReference>
<dbReference type="NCBIfam" id="NF001567">
    <property type="entry name" value="PRK00389.1"/>
    <property type="match status" value="1"/>
</dbReference>
<dbReference type="PANTHER" id="PTHR43757">
    <property type="entry name" value="AMINOMETHYLTRANSFERASE"/>
    <property type="match status" value="1"/>
</dbReference>
<dbReference type="PANTHER" id="PTHR43757:SF2">
    <property type="entry name" value="AMINOMETHYLTRANSFERASE, MITOCHONDRIAL"/>
    <property type="match status" value="1"/>
</dbReference>
<dbReference type="Pfam" id="PF01571">
    <property type="entry name" value="GCV_T"/>
    <property type="match status" value="1"/>
</dbReference>
<dbReference type="Pfam" id="PF08669">
    <property type="entry name" value="GCV_T_C"/>
    <property type="match status" value="1"/>
</dbReference>
<dbReference type="PIRSF" id="PIRSF006487">
    <property type="entry name" value="GcvT"/>
    <property type="match status" value="1"/>
</dbReference>
<dbReference type="SUPFAM" id="SSF101790">
    <property type="entry name" value="Aminomethyltransferase beta-barrel domain"/>
    <property type="match status" value="1"/>
</dbReference>
<dbReference type="SUPFAM" id="SSF103025">
    <property type="entry name" value="Folate-binding domain"/>
    <property type="match status" value="1"/>
</dbReference>
<comment type="function">
    <text evidence="1">The glycine cleavage system catalyzes the degradation of glycine.</text>
</comment>
<comment type="catalytic activity">
    <reaction evidence="1">
        <text>N(6)-[(R)-S(8)-aminomethyldihydrolipoyl]-L-lysyl-[protein] + (6S)-5,6,7,8-tetrahydrofolate = N(6)-[(R)-dihydrolipoyl]-L-lysyl-[protein] + (6R)-5,10-methylene-5,6,7,8-tetrahydrofolate + NH4(+)</text>
        <dbReference type="Rhea" id="RHEA:16945"/>
        <dbReference type="Rhea" id="RHEA-COMP:10475"/>
        <dbReference type="Rhea" id="RHEA-COMP:10492"/>
        <dbReference type="ChEBI" id="CHEBI:15636"/>
        <dbReference type="ChEBI" id="CHEBI:28938"/>
        <dbReference type="ChEBI" id="CHEBI:57453"/>
        <dbReference type="ChEBI" id="CHEBI:83100"/>
        <dbReference type="ChEBI" id="CHEBI:83143"/>
        <dbReference type="EC" id="2.1.2.10"/>
    </reaction>
</comment>
<comment type="subunit">
    <text evidence="1">The glycine cleavage system is composed of four proteins: P, T, L and H.</text>
</comment>
<comment type="similarity">
    <text evidence="1">Belongs to the GcvT family.</text>
</comment>
<comment type="sequence caution" evidence="2">
    <conflict type="erroneous initiation">
        <sequence resource="EMBL-CDS" id="BAA30246"/>
    </conflict>
</comment>
<proteinExistence type="evidence at protein level"/>
<feature type="chain" id="PRO_0000122625" description="Probable aminomethyltransferase">
    <location>
        <begin position="1"/>
        <end position="398"/>
    </location>
</feature>
<feature type="helix" evidence="3">
    <location>
        <begin position="8"/>
        <end position="14"/>
    </location>
</feature>
<feature type="strand" evidence="3">
    <location>
        <begin position="16"/>
        <end position="21"/>
    </location>
</feature>
<feature type="strand" evidence="3">
    <location>
        <begin position="24"/>
        <end position="31"/>
    </location>
</feature>
<feature type="helix" evidence="3">
    <location>
        <begin position="33"/>
        <end position="42"/>
    </location>
</feature>
<feature type="strand" evidence="3">
    <location>
        <begin position="45"/>
        <end position="48"/>
    </location>
</feature>
<feature type="strand" evidence="3">
    <location>
        <begin position="52"/>
        <end position="59"/>
    </location>
</feature>
<feature type="helix" evidence="3">
    <location>
        <begin position="62"/>
        <end position="69"/>
    </location>
</feature>
<feature type="strand" evidence="3">
    <location>
        <begin position="70"/>
        <end position="72"/>
    </location>
</feature>
<feature type="strand" evidence="3">
    <location>
        <begin position="79"/>
        <end position="88"/>
    </location>
</feature>
<feature type="strand" evidence="3">
    <location>
        <begin position="94"/>
        <end position="104"/>
    </location>
</feature>
<feature type="strand" evidence="3">
    <location>
        <begin position="107"/>
        <end position="112"/>
    </location>
</feature>
<feature type="turn" evidence="3">
    <location>
        <begin position="114"/>
        <end position="116"/>
    </location>
</feature>
<feature type="helix" evidence="3">
    <location>
        <begin position="117"/>
        <end position="132"/>
    </location>
</feature>
<feature type="strand" evidence="3">
    <location>
        <begin position="140"/>
        <end position="143"/>
    </location>
</feature>
<feature type="turn" evidence="3">
    <location>
        <begin position="145"/>
        <end position="147"/>
    </location>
</feature>
<feature type="strand" evidence="3">
    <location>
        <begin position="148"/>
        <end position="155"/>
    </location>
</feature>
<feature type="helix" evidence="3">
    <location>
        <begin position="158"/>
        <end position="166"/>
    </location>
</feature>
<feature type="helix" evidence="3">
    <location>
        <begin position="170"/>
        <end position="172"/>
    </location>
</feature>
<feature type="strand" evidence="3">
    <location>
        <begin position="177"/>
        <end position="183"/>
    </location>
</feature>
<feature type="strand" evidence="3">
    <location>
        <begin position="186"/>
        <end position="191"/>
    </location>
</feature>
<feature type="strand" evidence="3">
    <location>
        <begin position="195"/>
        <end position="198"/>
    </location>
</feature>
<feature type="strand" evidence="3">
    <location>
        <begin position="200"/>
        <end position="206"/>
    </location>
</feature>
<feature type="helix" evidence="3">
    <location>
        <begin position="215"/>
        <end position="217"/>
    </location>
</feature>
<feature type="helix" evidence="3">
    <location>
        <begin position="222"/>
        <end position="235"/>
    </location>
</feature>
<feature type="helix" evidence="3">
    <location>
        <begin position="236"/>
        <end position="238"/>
    </location>
</feature>
<feature type="strand" evidence="3">
    <location>
        <begin position="241"/>
        <end position="243"/>
    </location>
</feature>
<feature type="helix" evidence="3">
    <location>
        <begin position="245"/>
        <end position="255"/>
    </location>
</feature>
<feature type="turn" evidence="3">
    <location>
        <begin position="260"/>
        <end position="262"/>
    </location>
</feature>
<feature type="turn" evidence="3">
    <location>
        <begin position="279"/>
        <end position="283"/>
    </location>
</feature>
<feature type="helix" evidence="3">
    <location>
        <begin position="285"/>
        <end position="287"/>
    </location>
</feature>
<feature type="helix" evidence="3">
    <location>
        <begin position="297"/>
        <end position="306"/>
    </location>
</feature>
<feature type="strand" evidence="3">
    <location>
        <begin position="310"/>
        <end position="320"/>
    </location>
</feature>
<feature type="strand" evidence="3">
    <location>
        <begin position="328"/>
        <end position="331"/>
    </location>
</feature>
<feature type="strand" evidence="3">
    <location>
        <begin position="334"/>
        <end position="344"/>
    </location>
</feature>
<feature type="turn" evidence="3">
    <location>
        <begin position="346"/>
        <end position="348"/>
    </location>
</feature>
<feature type="strand" evidence="3">
    <location>
        <begin position="350"/>
        <end position="358"/>
    </location>
</feature>
<feature type="helix" evidence="3">
    <location>
        <begin position="359"/>
        <end position="361"/>
    </location>
</feature>
<feature type="strand" evidence="3">
    <location>
        <begin position="367"/>
        <end position="372"/>
    </location>
</feature>
<feature type="strand" evidence="3">
    <location>
        <begin position="375"/>
        <end position="382"/>
    </location>
</feature>
<feature type="turn" evidence="3">
    <location>
        <begin position="389"/>
        <end position="391"/>
    </location>
</feature>
<name>GCST_PYRHO</name>
<accession>O58888</accession>
<sequence>MVKRVHIFDWHKEHARKIEEFAGWEMPIWYSSIKEEHLAVRNAVGIFDVSHMGEIVFRGKDALKFLQYVTTNDISKPPAISGTYTLVLNERGAIKDETLVFNMGNNEYLMICDSDAFEKLYAWFTYLKRTIEQFTKLDLEIELKTYDIAMFAVQGPKARDLAKDLFGIDINEMWWFQARWVELDGIKMLLSRSGYTGENGFEVYIEDANPYHPDESKRGEPEKALHVWERILEEGKKYGIKPCGLGARDTLRLEAGYTLYGNETKELQLLSTDIDEVTPLQANLEFAIYWDKDFIGKDALLKQKERGVGRKLVHFKMIDKGIPREGYKVYANGEMIGEVTSGTLSPLLNVGIGIAFVKEEYAKPGIEIEVEIRGQRKKAVTVTPPFYDPKKYGLFRET</sequence>
<keyword id="KW-0002">3D-structure</keyword>
<keyword id="KW-0032">Aminotransferase</keyword>
<keyword id="KW-0808">Transferase</keyword>
<evidence type="ECO:0000255" key="1">
    <source>
        <dbReference type="HAMAP-Rule" id="MF_00259"/>
    </source>
</evidence>
<evidence type="ECO:0000305" key="2"/>
<evidence type="ECO:0007829" key="3">
    <source>
        <dbReference type="PDB" id="1V5V"/>
    </source>
</evidence>